<reference key="1">
    <citation type="journal article" date="2007" name="PLoS Genet.">
        <title>Meningococcal genetic variation mechanisms viewed through comparative analysis of serogroup C strain FAM18.</title>
        <authorList>
            <person name="Bentley S.D."/>
            <person name="Vernikos G.S."/>
            <person name="Snyder L.A.S."/>
            <person name="Churcher C."/>
            <person name="Arrowsmith C."/>
            <person name="Chillingworth T."/>
            <person name="Cronin A."/>
            <person name="Davis P.H."/>
            <person name="Holroyd N.E."/>
            <person name="Jagels K."/>
            <person name="Maddison M."/>
            <person name="Moule S."/>
            <person name="Rabbinowitsch E."/>
            <person name="Sharp S."/>
            <person name="Unwin L."/>
            <person name="Whitehead S."/>
            <person name="Quail M.A."/>
            <person name="Achtman M."/>
            <person name="Barrell B.G."/>
            <person name="Saunders N.J."/>
            <person name="Parkhill J."/>
        </authorList>
    </citation>
    <scope>NUCLEOTIDE SEQUENCE [LARGE SCALE GENOMIC DNA]</scope>
    <source>
        <strain>ATCC 700532 / DSM 15464 / FAM18</strain>
    </source>
</reference>
<keyword id="KW-0067">ATP-binding</keyword>
<keyword id="KW-0963">Cytoplasm</keyword>
<keyword id="KW-0227">DNA damage</keyword>
<keyword id="KW-0233">DNA recombination</keyword>
<keyword id="KW-0234">DNA repair</keyword>
<keyword id="KW-0238">DNA-binding</keyword>
<keyword id="KW-0547">Nucleotide-binding</keyword>
<keyword id="KW-0742">SOS response</keyword>
<dbReference type="EMBL" id="AM421808">
    <property type="protein sequence ID" value="CAM10598.1"/>
    <property type="molecule type" value="Genomic_DNA"/>
</dbReference>
<dbReference type="RefSeq" id="WP_002216923.1">
    <property type="nucleotide sequence ID" value="NC_008767.1"/>
</dbReference>
<dbReference type="SMR" id="A1KUQ0"/>
<dbReference type="KEGG" id="nmc:NMC1382"/>
<dbReference type="HOGENOM" id="CLU_040469_3_2_4"/>
<dbReference type="Proteomes" id="UP000002286">
    <property type="component" value="Chromosome"/>
</dbReference>
<dbReference type="GO" id="GO:0005829">
    <property type="term" value="C:cytosol"/>
    <property type="evidence" value="ECO:0007669"/>
    <property type="project" value="TreeGrafter"/>
</dbReference>
<dbReference type="GO" id="GO:0005524">
    <property type="term" value="F:ATP binding"/>
    <property type="evidence" value="ECO:0007669"/>
    <property type="project" value="UniProtKB-UniRule"/>
</dbReference>
<dbReference type="GO" id="GO:0016887">
    <property type="term" value="F:ATP hydrolysis activity"/>
    <property type="evidence" value="ECO:0007669"/>
    <property type="project" value="InterPro"/>
</dbReference>
<dbReference type="GO" id="GO:0140664">
    <property type="term" value="F:ATP-dependent DNA damage sensor activity"/>
    <property type="evidence" value="ECO:0007669"/>
    <property type="project" value="InterPro"/>
</dbReference>
<dbReference type="GO" id="GO:0003684">
    <property type="term" value="F:damaged DNA binding"/>
    <property type="evidence" value="ECO:0007669"/>
    <property type="project" value="UniProtKB-UniRule"/>
</dbReference>
<dbReference type="GO" id="GO:0003697">
    <property type="term" value="F:single-stranded DNA binding"/>
    <property type="evidence" value="ECO:0007669"/>
    <property type="project" value="UniProtKB-UniRule"/>
</dbReference>
<dbReference type="GO" id="GO:0006310">
    <property type="term" value="P:DNA recombination"/>
    <property type="evidence" value="ECO:0007669"/>
    <property type="project" value="UniProtKB-UniRule"/>
</dbReference>
<dbReference type="GO" id="GO:0006281">
    <property type="term" value="P:DNA repair"/>
    <property type="evidence" value="ECO:0007669"/>
    <property type="project" value="UniProtKB-UniRule"/>
</dbReference>
<dbReference type="GO" id="GO:0009432">
    <property type="term" value="P:SOS response"/>
    <property type="evidence" value="ECO:0007669"/>
    <property type="project" value="UniProtKB-UniRule"/>
</dbReference>
<dbReference type="CDD" id="cd00983">
    <property type="entry name" value="RecA"/>
    <property type="match status" value="1"/>
</dbReference>
<dbReference type="FunFam" id="3.40.50.300:FF:000087">
    <property type="entry name" value="Recombinase RecA"/>
    <property type="match status" value="1"/>
</dbReference>
<dbReference type="Gene3D" id="3.40.50.300">
    <property type="entry name" value="P-loop containing nucleotide triphosphate hydrolases"/>
    <property type="match status" value="1"/>
</dbReference>
<dbReference type="HAMAP" id="MF_00268">
    <property type="entry name" value="RecA"/>
    <property type="match status" value="1"/>
</dbReference>
<dbReference type="InterPro" id="IPR003593">
    <property type="entry name" value="AAA+_ATPase"/>
</dbReference>
<dbReference type="InterPro" id="IPR013765">
    <property type="entry name" value="DNA_recomb/repair_RecA"/>
</dbReference>
<dbReference type="InterPro" id="IPR020584">
    <property type="entry name" value="DNA_recomb/repair_RecA_CS"/>
</dbReference>
<dbReference type="InterPro" id="IPR027417">
    <property type="entry name" value="P-loop_NTPase"/>
</dbReference>
<dbReference type="InterPro" id="IPR049261">
    <property type="entry name" value="RecA-like_C"/>
</dbReference>
<dbReference type="InterPro" id="IPR049428">
    <property type="entry name" value="RecA-like_N"/>
</dbReference>
<dbReference type="InterPro" id="IPR020588">
    <property type="entry name" value="RecA_ATP-bd"/>
</dbReference>
<dbReference type="InterPro" id="IPR023400">
    <property type="entry name" value="RecA_C_sf"/>
</dbReference>
<dbReference type="InterPro" id="IPR020587">
    <property type="entry name" value="RecA_monomer-monomer_interface"/>
</dbReference>
<dbReference type="NCBIfam" id="TIGR02012">
    <property type="entry name" value="tigrfam_recA"/>
    <property type="match status" value="1"/>
</dbReference>
<dbReference type="PANTHER" id="PTHR45900:SF1">
    <property type="entry name" value="MITOCHONDRIAL DNA REPAIR PROTEIN RECA HOMOLOG-RELATED"/>
    <property type="match status" value="1"/>
</dbReference>
<dbReference type="PANTHER" id="PTHR45900">
    <property type="entry name" value="RECA"/>
    <property type="match status" value="1"/>
</dbReference>
<dbReference type="Pfam" id="PF00154">
    <property type="entry name" value="RecA"/>
    <property type="match status" value="1"/>
</dbReference>
<dbReference type="Pfam" id="PF21096">
    <property type="entry name" value="RecA_C"/>
    <property type="match status" value="1"/>
</dbReference>
<dbReference type="PRINTS" id="PR00142">
    <property type="entry name" value="RECA"/>
</dbReference>
<dbReference type="SMART" id="SM00382">
    <property type="entry name" value="AAA"/>
    <property type="match status" value="1"/>
</dbReference>
<dbReference type="SUPFAM" id="SSF52540">
    <property type="entry name" value="P-loop containing nucleoside triphosphate hydrolases"/>
    <property type="match status" value="1"/>
</dbReference>
<dbReference type="SUPFAM" id="SSF54752">
    <property type="entry name" value="RecA protein, C-terminal domain"/>
    <property type="match status" value="1"/>
</dbReference>
<dbReference type="PROSITE" id="PS00321">
    <property type="entry name" value="RECA_1"/>
    <property type="match status" value="1"/>
</dbReference>
<dbReference type="PROSITE" id="PS50162">
    <property type="entry name" value="RECA_2"/>
    <property type="match status" value="1"/>
</dbReference>
<dbReference type="PROSITE" id="PS50163">
    <property type="entry name" value="RECA_3"/>
    <property type="match status" value="1"/>
</dbReference>
<proteinExistence type="inferred from homology"/>
<organism>
    <name type="scientific">Neisseria meningitidis serogroup C / serotype 2a (strain ATCC 700532 / DSM 15464 / FAM18)</name>
    <dbReference type="NCBI Taxonomy" id="272831"/>
    <lineage>
        <taxon>Bacteria</taxon>
        <taxon>Pseudomonadati</taxon>
        <taxon>Pseudomonadota</taxon>
        <taxon>Betaproteobacteria</taxon>
        <taxon>Neisseriales</taxon>
        <taxon>Neisseriaceae</taxon>
        <taxon>Neisseria</taxon>
    </lineage>
</organism>
<evidence type="ECO:0000255" key="1">
    <source>
        <dbReference type="HAMAP-Rule" id="MF_00268"/>
    </source>
</evidence>
<accession>A1KUQ0</accession>
<protein>
    <recommendedName>
        <fullName evidence="1">Protein RecA</fullName>
    </recommendedName>
    <alternativeName>
        <fullName evidence="1">Recombinase A</fullName>
    </alternativeName>
</protein>
<feature type="chain" id="PRO_1000047950" description="Protein RecA">
    <location>
        <begin position="1"/>
        <end position="348"/>
    </location>
</feature>
<feature type="binding site" evidence="1">
    <location>
        <begin position="66"/>
        <end position="73"/>
    </location>
    <ligand>
        <name>ATP</name>
        <dbReference type="ChEBI" id="CHEBI:30616"/>
    </ligand>
</feature>
<name>RECA_NEIMF</name>
<sequence>MSDDKSKALAAALAQIEKSFGKGAIMKMDGSQQEENLEVISTGSLGLDLALGVGGLPRGRIVEIFGPESSGKTTLCLEAVAQCQKNGGVCAFVDAEHAFDPVYARKLGVKVEELYLSQPDTGEQALEICDTLVRSGGIDMVVVDSVAALVPKAEIEGDMGDSHVGLQARLMSQALRKLTGHIKKTNTLVVFINQIRMKIGVMFGSPETTTGGNALKFYSSVRLDIRRTGSIKKGEEVLGNETRVKVIKNKVAPPFRQAEFDILYGEGISWEGELIDIGVKNDIINKSGAWYSYNGAKIGQGKDNVRVWLKENPEIADEIDAKIRALNGIEMHITEGTQDETDGERPEE</sequence>
<gene>
    <name evidence="1" type="primary">recA</name>
    <name type="ordered locus">NMC1382</name>
</gene>
<comment type="function">
    <text evidence="1">Can catalyze the hydrolysis of ATP in the presence of single-stranded DNA, the ATP-dependent uptake of single-stranded DNA by duplex DNA, and the ATP-dependent hybridization of homologous single-stranded DNAs. It interacts with LexA causing its activation and leading to its autocatalytic cleavage.</text>
</comment>
<comment type="subcellular location">
    <subcellularLocation>
        <location evidence="1">Cytoplasm</location>
    </subcellularLocation>
</comment>
<comment type="similarity">
    <text evidence="1">Belongs to the RecA family.</text>
</comment>